<proteinExistence type="evidence at transcript level"/>
<keyword id="KW-1003">Cell membrane</keyword>
<keyword id="KW-0472">Membrane</keyword>
<keyword id="KW-1185">Reference proteome</keyword>
<keyword id="KW-0812">Transmembrane</keyword>
<keyword id="KW-1133">Transmembrane helix</keyword>
<dbReference type="EMBL" id="EU965751">
    <property type="protein sequence ID" value="ACG37869.1"/>
    <property type="molecule type" value="mRNA"/>
</dbReference>
<dbReference type="EMBL" id="BT038761">
    <property type="protein sequence ID" value="ACF83766.1"/>
    <property type="molecule type" value="mRNA"/>
</dbReference>
<dbReference type="RefSeq" id="NP_001144092.1">
    <property type="nucleotide sequence ID" value="NM_001150620.1"/>
</dbReference>
<dbReference type="FunCoup" id="B4FNS3">
    <property type="interactions" value="2443"/>
</dbReference>
<dbReference type="PaxDb" id="4577-GRMZM2G136901_P01"/>
<dbReference type="EnsemblPlants" id="Zm00001eb224040_T001">
    <property type="protein sequence ID" value="Zm00001eb224040_P001"/>
    <property type="gene ID" value="Zm00001eb224040"/>
</dbReference>
<dbReference type="GeneID" id="100276927"/>
<dbReference type="Gramene" id="Zm00001eb224040_T001">
    <property type="protein sequence ID" value="Zm00001eb224040_P001"/>
    <property type="gene ID" value="Zm00001eb224040"/>
</dbReference>
<dbReference type="KEGG" id="zma:100276927"/>
<dbReference type="eggNOG" id="ENOG502QTTS">
    <property type="taxonomic scope" value="Eukaryota"/>
</dbReference>
<dbReference type="InParanoid" id="B4FNS3"/>
<dbReference type="OrthoDB" id="828022at2759"/>
<dbReference type="Proteomes" id="UP000007305">
    <property type="component" value="Chromosome 5"/>
</dbReference>
<dbReference type="ExpressionAtlas" id="B4FNS3">
    <property type="expression patterns" value="baseline and differential"/>
</dbReference>
<dbReference type="GO" id="GO:0016020">
    <property type="term" value="C:membrane"/>
    <property type="evidence" value="ECO:0000318"/>
    <property type="project" value="GO_Central"/>
</dbReference>
<dbReference type="GO" id="GO:0005886">
    <property type="term" value="C:plasma membrane"/>
    <property type="evidence" value="ECO:0007669"/>
    <property type="project" value="UniProtKB-SubCell"/>
</dbReference>
<dbReference type="InterPro" id="IPR006702">
    <property type="entry name" value="CASP_dom"/>
</dbReference>
<dbReference type="InterPro" id="IPR045009">
    <property type="entry name" value="CASPL-5"/>
</dbReference>
<dbReference type="PANTHER" id="PTHR32021:SF19">
    <property type="entry name" value="CASP-LIKE PROTEIN 5A2"/>
    <property type="match status" value="1"/>
</dbReference>
<dbReference type="PANTHER" id="PTHR32021">
    <property type="entry name" value="CASP-LIKE PROTEIN 5B3"/>
    <property type="match status" value="1"/>
</dbReference>
<dbReference type="Pfam" id="PF04535">
    <property type="entry name" value="CASP_dom"/>
    <property type="match status" value="1"/>
</dbReference>
<evidence type="ECO:0000250" key="1"/>
<evidence type="ECO:0000255" key="2"/>
<evidence type="ECO:0000256" key="3">
    <source>
        <dbReference type="SAM" id="MobiDB-lite"/>
    </source>
</evidence>
<evidence type="ECO:0000305" key="4"/>
<reference key="1">
    <citation type="journal article" date="2009" name="Plant Mol. Biol.">
        <title>Insights into corn genes derived from large-scale cDNA sequencing.</title>
        <authorList>
            <person name="Alexandrov N.N."/>
            <person name="Brover V.V."/>
            <person name="Freidin S."/>
            <person name="Troukhan M.E."/>
            <person name="Tatarinova T.V."/>
            <person name="Zhang H."/>
            <person name="Swaller T.J."/>
            <person name="Lu Y.-P."/>
            <person name="Bouck J."/>
            <person name="Flavell R.B."/>
            <person name="Feldmann K.A."/>
        </authorList>
    </citation>
    <scope>NUCLEOTIDE SEQUENCE [LARGE SCALE MRNA]</scope>
</reference>
<reference key="2">
    <citation type="journal article" date="2009" name="PLoS Genet.">
        <title>Sequencing, mapping, and analysis of 27,455 maize full-length cDNAs.</title>
        <authorList>
            <person name="Soderlund C."/>
            <person name="Descour A."/>
            <person name="Kudrna D."/>
            <person name="Bomhoff M."/>
            <person name="Boyd L."/>
            <person name="Currie J."/>
            <person name="Angelova A."/>
            <person name="Collura K."/>
            <person name="Wissotski M."/>
            <person name="Ashley E."/>
            <person name="Morrow D."/>
            <person name="Fernandes J."/>
            <person name="Walbot V."/>
            <person name="Yu Y."/>
        </authorList>
    </citation>
    <scope>NUCLEOTIDE SEQUENCE [LARGE SCALE MRNA]</scope>
    <source>
        <strain>cv. B73</strain>
    </source>
</reference>
<reference key="3">
    <citation type="journal article" date="2014" name="Plant Physiol.">
        <title>Functional and evolutionary analysis of the CASPARIAN STRIP MEMBRANE DOMAIN PROTEIN family.</title>
        <authorList>
            <person name="Roppolo D."/>
            <person name="Boeckmann B."/>
            <person name="Pfister A."/>
            <person name="Boutet E."/>
            <person name="Rubio M.C."/>
            <person name="Denervaud-Tendon V."/>
            <person name="Vermeer J.E."/>
            <person name="Gheyselinck J."/>
            <person name="Xenarios I."/>
            <person name="Geldner N."/>
        </authorList>
    </citation>
    <scope>GENE FAMILY</scope>
    <scope>NOMENCLATURE</scope>
</reference>
<feature type="chain" id="PRO_0000418701" description="CASP-like protein 5A3">
    <location>
        <begin position="1"/>
        <end position="190"/>
    </location>
</feature>
<feature type="topological domain" description="Cytoplasmic" evidence="2">
    <location>
        <begin position="1"/>
        <end position="50"/>
    </location>
</feature>
<feature type="transmembrane region" description="Helical" evidence="2">
    <location>
        <begin position="51"/>
        <end position="71"/>
    </location>
</feature>
<feature type="topological domain" description="Extracellular" evidence="2">
    <location>
        <begin position="72"/>
        <end position="81"/>
    </location>
</feature>
<feature type="transmembrane region" description="Helical" evidence="2">
    <location>
        <begin position="82"/>
        <end position="102"/>
    </location>
</feature>
<feature type="topological domain" description="Cytoplasmic" evidence="2">
    <location>
        <begin position="103"/>
        <end position="126"/>
    </location>
</feature>
<feature type="transmembrane region" description="Helical" evidence="2">
    <location>
        <begin position="127"/>
        <end position="147"/>
    </location>
</feature>
<feature type="topological domain" description="Extracellular" evidence="2">
    <location>
        <begin position="148"/>
        <end position="164"/>
    </location>
</feature>
<feature type="transmembrane region" description="Helical" evidence="2">
    <location>
        <begin position="165"/>
        <end position="185"/>
    </location>
</feature>
<feature type="topological domain" description="Cytoplasmic" evidence="2">
    <location>
        <begin position="186"/>
        <end position="190"/>
    </location>
</feature>
<feature type="region of interest" description="Disordered" evidence="3">
    <location>
        <begin position="1"/>
        <end position="31"/>
    </location>
</feature>
<feature type="compositionally biased region" description="Low complexity" evidence="3">
    <location>
        <begin position="1"/>
        <end position="12"/>
    </location>
</feature>
<feature type="compositionally biased region" description="Low complexity" evidence="3">
    <location>
        <begin position="20"/>
        <end position="31"/>
    </location>
</feature>
<accession>B4FNS3</accession>
<organism>
    <name type="scientific">Zea mays</name>
    <name type="common">Maize</name>
    <dbReference type="NCBI Taxonomy" id="4577"/>
    <lineage>
        <taxon>Eukaryota</taxon>
        <taxon>Viridiplantae</taxon>
        <taxon>Streptophyta</taxon>
        <taxon>Embryophyta</taxon>
        <taxon>Tracheophyta</taxon>
        <taxon>Spermatophyta</taxon>
        <taxon>Magnoliopsida</taxon>
        <taxon>Liliopsida</taxon>
        <taxon>Poales</taxon>
        <taxon>Poaceae</taxon>
        <taxon>PACMAD clade</taxon>
        <taxon>Panicoideae</taxon>
        <taxon>Andropogonodae</taxon>
        <taxon>Andropogoneae</taxon>
        <taxon>Tripsacinae</taxon>
        <taxon>Zea</taxon>
    </lineage>
</organism>
<comment type="subunit">
    <text evidence="1">Homodimer and heterodimers.</text>
</comment>
<comment type="subcellular location">
    <subcellularLocation>
        <location evidence="1">Cell membrane</location>
        <topology evidence="1">Multi-pass membrane protein</topology>
    </subcellularLocation>
</comment>
<comment type="similarity">
    <text evidence="4">Belongs to the Casparian strip membrane proteins (CASP) family.</text>
</comment>
<name>CSPLK_MAIZE</name>
<sequence>MRASRPAVHPVEAAPPPPAAAAEGPEAQVEGAAHPRGVRMKDPPGAPGTPAGLGLRLAQAFFAAAALAVMASTNDFPSVSAFSYLVAAAILQCLWSLLLAFVDIYALLVKRSLRNARAVCIFTIGDGITGTITLGAACASAGITVLIGNDLNICAENHCASFETATALAFISWFALAPSCILNFWSMASR</sequence>
<protein>
    <recommendedName>
        <fullName>CASP-like protein 5A3</fullName>
        <shortName>ZmCASPL5A3</shortName>
    </recommendedName>
</protein>